<proteinExistence type="inferred from homology"/>
<comment type="function">
    <text evidence="1">Catalyzes the deamination of dCTP to dUTP.</text>
</comment>
<comment type="catalytic activity">
    <reaction evidence="1">
        <text>dCTP + H2O + H(+) = dUTP + NH4(+)</text>
        <dbReference type="Rhea" id="RHEA:22680"/>
        <dbReference type="ChEBI" id="CHEBI:15377"/>
        <dbReference type="ChEBI" id="CHEBI:15378"/>
        <dbReference type="ChEBI" id="CHEBI:28938"/>
        <dbReference type="ChEBI" id="CHEBI:61481"/>
        <dbReference type="ChEBI" id="CHEBI:61555"/>
        <dbReference type="EC" id="3.5.4.13"/>
    </reaction>
</comment>
<comment type="pathway">
    <text evidence="1">Pyrimidine metabolism; dUMP biosynthesis; dUMP from dCTP (dUTP route): step 1/2.</text>
</comment>
<comment type="subunit">
    <text evidence="1">Homotrimer.</text>
</comment>
<comment type="similarity">
    <text evidence="1">Belongs to the dCTP deaminase family.</text>
</comment>
<dbReference type="EC" id="3.5.4.13" evidence="1"/>
<dbReference type="EMBL" id="CR628336">
    <property type="protein sequence ID" value="CAH14180.1"/>
    <property type="molecule type" value="Genomic_DNA"/>
</dbReference>
<dbReference type="RefSeq" id="WP_010948641.1">
    <property type="nucleotide sequence ID" value="NC_006368.1"/>
</dbReference>
<dbReference type="SMR" id="Q5X0R9"/>
<dbReference type="GeneID" id="57036962"/>
<dbReference type="KEGG" id="lpp:lpp3027"/>
<dbReference type="LegioList" id="lpp3027"/>
<dbReference type="HOGENOM" id="CLU_087476_4_0_6"/>
<dbReference type="UniPathway" id="UPA00610">
    <property type="reaction ID" value="UER00665"/>
</dbReference>
<dbReference type="GO" id="GO:0008829">
    <property type="term" value="F:dCTP deaminase activity"/>
    <property type="evidence" value="ECO:0007669"/>
    <property type="project" value="UniProtKB-UniRule"/>
</dbReference>
<dbReference type="GO" id="GO:0000166">
    <property type="term" value="F:nucleotide binding"/>
    <property type="evidence" value="ECO:0007669"/>
    <property type="project" value="UniProtKB-KW"/>
</dbReference>
<dbReference type="GO" id="GO:0006226">
    <property type="term" value="P:dUMP biosynthetic process"/>
    <property type="evidence" value="ECO:0007669"/>
    <property type="project" value="UniProtKB-UniPathway"/>
</dbReference>
<dbReference type="GO" id="GO:0006229">
    <property type="term" value="P:dUTP biosynthetic process"/>
    <property type="evidence" value="ECO:0007669"/>
    <property type="project" value="UniProtKB-UniRule"/>
</dbReference>
<dbReference type="GO" id="GO:0015949">
    <property type="term" value="P:nucleobase-containing small molecule interconversion"/>
    <property type="evidence" value="ECO:0007669"/>
    <property type="project" value="TreeGrafter"/>
</dbReference>
<dbReference type="CDD" id="cd07557">
    <property type="entry name" value="trimeric_dUTPase"/>
    <property type="match status" value="1"/>
</dbReference>
<dbReference type="FunFam" id="2.70.40.10:FF:000001">
    <property type="entry name" value="dCTP deaminase"/>
    <property type="match status" value="1"/>
</dbReference>
<dbReference type="Gene3D" id="2.70.40.10">
    <property type="match status" value="1"/>
</dbReference>
<dbReference type="HAMAP" id="MF_00146">
    <property type="entry name" value="dCTP_deaminase"/>
    <property type="match status" value="1"/>
</dbReference>
<dbReference type="InterPro" id="IPR011962">
    <property type="entry name" value="dCTP_deaminase"/>
</dbReference>
<dbReference type="InterPro" id="IPR036157">
    <property type="entry name" value="dUTPase-like_sf"/>
</dbReference>
<dbReference type="InterPro" id="IPR033704">
    <property type="entry name" value="dUTPase_trimeric"/>
</dbReference>
<dbReference type="NCBIfam" id="TIGR02274">
    <property type="entry name" value="dCTP_deam"/>
    <property type="match status" value="1"/>
</dbReference>
<dbReference type="PANTHER" id="PTHR42680">
    <property type="entry name" value="DCTP DEAMINASE"/>
    <property type="match status" value="1"/>
</dbReference>
<dbReference type="PANTHER" id="PTHR42680:SF3">
    <property type="entry name" value="DCTP DEAMINASE"/>
    <property type="match status" value="1"/>
</dbReference>
<dbReference type="Pfam" id="PF22769">
    <property type="entry name" value="DCD"/>
    <property type="match status" value="1"/>
</dbReference>
<dbReference type="SUPFAM" id="SSF51283">
    <property type="entry name" value="dUTPase-like"/>
    <property type="match status" value="1"/>
</dbReference>
<name>DCD_LEGPA</name>
<organism>
    <name type="scientific">Legionella pneumophila (strain Paris)</name>
    <dbReference type="NCBI Taxonomy" id="297246"/>
    <lineage>
        <taxon>Bacteria</taxon>
        <taxon>Pseudomonadati</taxon>
        <taxon>Pseudomonadota</taxon>
        <taxon>Gammaproteobacteria</taxon>
        <taxon>Legionellales</taxon>
        <taxon>Legionellaceae</taxon>
        <taxon>Legionella</taxon>
    </lineage>
</organism>
<evidence type="ECO:0000255" key="1">
    <source>
        <dbReference type="HAMAP-Rule" id="MF_00146"/>
    </source>
</evidence>
<accession>Q5X0R9</accession>
<gene>
    <name evidence="1" type="primary">dcd</name>
    <name type="ordered locus">lpp3027</name>
</gene>
<protein>
    <recommendedName>
        <fullName evidence="1">dCTP deaminase</fullName>
        <ecNumber evidence="1">3.5.4.13</ecNumber>
    </recommendedName>
    <alternativeName>
        <fullName evidence="1">Deoxycytidine triphosphate deaminase</fullName>
    </alternativeName>
</protein>
<keyword id="KW-0378">Hydrolase</keyword>
<keyword id="KW-0546">Nucleotide metabolism</keyword>
<keyword id="KW-0547">Nucleotide-binding</keyword>
<sequence>MSIKSDRWIEKMALEHGMISPFQAGQVRENQNGRIISYGVSSYGYDVRCSNEFKIFTNINSAIVDPKAFDENSFVDVQSDVCIIPPNSFALARTVEYFRIPRNILTICLGKSTYARCGIIVNVTPLEPEWEGHVTLEFSNTTTLPAKIYAYEGVAQMLFLEANEVCAVSYRDRNGKYQGQTGVTLPRT</sequence>
<feature type="chain" id="PRO_1000009745" description="dCTP deaminase">
    <location>
        <begin position="1"/>
        <end position="188"/>
    </location>
</feature>
<feature type="active site" description="Proton donor/acceptor" evidence="1">
    <location>
        <position position="137"/>
    </location>
</feature>
<feature type="binding site" evidence="1">
    <location>
        <begin position="111"/>
        <end position="116"/>
    </location>
    <ligand>
        <name>dCTP</name>
        <dbReference type="ChEBI" id="CHEBI:61481"/>
    </ligand>
</feature>
<feature type="binding site" evidence="1">
    <location>
        <begin position="135"/>
        <end position="137"/>
    </location>
    <ligand>
        <name>dCTP</name>
        <dbReference type="ChEBI" id="CHEBI:61481"/>
    </ligand>
</feature>
<feature type="binding site" evidence="1">
    <location>
        <position position="156"/>
    </location>
    <ligand>
        <name>dCTP</name>
        <dbReference type="ChEBI" id="CHEBI:61481"/>
    </ligand>
</feature>
<feature type="binding site" evidence="1">
    <location>
        <position position="170"/>
    </location>
    <ligand>
        <name>dCTP</name>
        <dbReference type="ChEBI" id="CHEBI:61481"/>
    </ligand>
</feature>
<feature type="binding site" evidence="1">
    <location>
        <position position="180"/>
    </location>
    <ligand>
        <name>dCTP</name>
        <dbReference type="ChEBI" id="CHEBI:61481"/>
    </ligand>
</feature>
<reference key="1">
    <citation type="journal article" date="2004" name="Nat. Genet.">
        <title>Evidence in the Legionella pneumophila genome for exploitation of host cell functions and high genome plasticity.</title>
        <authorList>
            <person name="Cazalet C."/>
            <person name="Rusniok C."/>
            <person name="Brueggemann H."/>
            <person name="Zidane N."/>
            <person name="Magnier A."/>
            <person name="Ma L."/>
            <person name="Tichit M."/>
            <person name="Jarraud S."/>
            <person name="Bouchier C."/>
            <person name="Vandenesch F."/>
            <person name="Kunst F."/>
            <person name="Etienne J."/>
            <person name="Glaser P."/>
            <person name="Buchrieser C."/>
        </authorList>
    </citation>
    <scope>NUCLEOTIDE SEQUENCE [LARGE SCALE GENOMIC DNA]</scope>
    <source>
        <strain>Paris</strain>
    </source>
</reference>